<reference key="1">
    <citation type="journal article" date="2007" name="PLoS ONE">
        <title>Paradoxical DNA repair and peroxide resistance gene conservation in Bacillus pumilus SAFR-032.</title>
        <authorList>
            <person name="Gioia J."/>
            <person name="Yerrapragada S."/>
            <person name="Qin X."/>
            <person name="Jiang H."/>
            <person name="Igboeli O.C."/>
            <person name="Muzny D."/>
            <person name="Dugan-Rocha S."/>
            <person name="Ding Y."/>
            <person name="Hawes A."/>
            <person name="Liu W."/>
            <person name="Perez L."/>
            <person name="Kovar C."/>
            <person name="Dinh H."/>
            <person name="Lee S."/>
            <person name="Nazareth L."/>
            <person name="Blyth P."/>
            <person name="Holder M."/>
            <person name="Buhay C."/>
            <person name="Tirumalai M.R."/>
            <person name="Liu Y."/>
            <person name="Dasgupta I."/>
            <person name="Bokhetache L."/>
            <person name="Fujita M."/>
            <person name="Karouia F."/>
            <person name="Eswara Moorthy P."/>
            <person name="Siefert J."/>
            <person name="Uzman A."/>
            <person name="Buzumbo P."/>
            <person name="Verma A."/>
            <person name="Zwiya H."/>
            <person name="McWilliams B.D."/>
            <person name="Olowu A."/>
            <person name="Clinkenbeard K.D."/>
            <person name="Newcombe D."/>
            <person name="Golebiewski L."/>
            <person name="Petrosino J.F."/>
            <person name="Nicholson W.L."/>
            <person name="Fox G.E."/>
            <person name="Venkateswaran K."/>
            <person name="Highlander S.K."/>
            <person name="Weinstock G.M."/>
        </authorList>
    </citation>
    <scope>NUCLEOTIDE SEQUENCE [LARGE SCALE GENOMIC DNA]</scope>
    <source>
        <strain>SAFR-032</strain>
    </source>
</reference>
<dbReference type="EC" id="2.7.1.21" evidence="1"/>
<dbReference type="EMBL" id="CP000813">
    <property type="protein sequence ID" value="ABV64002.1"/>
    <property type="molecule type" value="Genomic_DNA"/>
</dbReference>
<dbReference type="RefSeq" id="WP_003214626.1">
    <property type="nucleotide sequence ID" value="NZ_VEIS01000002.1"/>
</dbReference>
<dbReference type="SMR" id="A8FID5"/>
<dbReference type="STRING" id="315750.BPUM_3349"/>
<dbReference type="GeneID" id="5622639"/>
<dbReference type="KEGG" id="bpu:BPUM_3349"/>
<dbReference type="eggNOG" id="COG1435">
    <property type="taxonomic scope" value="Bacteria"/>
</dbReference>
<dbReference type="HOGENOM" id="CLU_064400_3_0_9"/>
<dbReference type="OrthoDB" id="9781579at2"/>
<dbReference type="Proteomes" id="UP000001355">
    <property type="component" value="Chromosome"/>
</dbReference>
<dbReference type="GO" id="GO:0005829">
    <property type="term" value="C:cytosol"/>
    <property type="evidence" value="ECO:0007669"/>
    <property type="project" value="TreeGrafter"/>
</dbReference>
<dbReference type="GO" id="GO:0005524">
    <property type="term" value="F:ATP binding"/>
    <property type="evidence" value="ECO:0007669"/>
    <property type="project" value="UniProtKB-UniRule"/>
</dbReference>
<dbReference type="GO" id="GO:0004797">
    <property type="term" value="F:thymidine kinase activity"/>
    <property type="evidence" value="ECO:0007669"/>
    <property type="project" value="UniProtKB-UniRule"/>
</dbReference>
<dbReference type="GO" id="GO:0008270">
    <property type="term" value="F:zinc ion binding"/>
    <property type="evidence" value="ECO:0007669"/>
    <property type="project" value="UniProtKB-UniRule"/>
</dbReference>
<dbReference type="GO" id="GO:0071897">
    <property type="term" value="P:DNA biosynthetic process"/>
    <property type="evidence" value="ECO:0007669"/>
    <property type="project" value="UniProtKB-KW"/>
</dbReference>
<dbReference type="GO" id="GO:0046104">
    <property type="term" value="P:thymidine metabolic process"/>
    <property type="evidence" value="ECO:0007669"/>
    <property type="project" value="TreeGrafter"/>
</dbReference>
<dbReference type="FunFam" id="3.30.60.20:FF:000026">
    <property type="entry name" value="Thymidine kinase"/>
    <property type="match status" value="1"/>
</dbReference>
<dbReference type="FunFam" id="3.40.50.300:FF:000384">
    <property type="entry name" value="Thymidine kinase"/>
    <property type="match status" value="1"/>
</dbReference>
<dbReference type="Gene3D" id="3.30.60.20">
    <property type="match status" value="1"/>
</dbReference>
<dbReference type="Gene3D" id="3.40.50.300">
    <property type="entry name" value="P-loop containing nucleotide triphosphate hydrolases"/>
    <property type="match status" value="1"/>
</dbReference>
<dbReference type="HAMAP" id="MF_00124">
    <property type="entry name" value="Thymidine_kinase"/>
    <property type="match status" value="1"/>
</dbReference>
<dbReference type="InterPro" id="IPR027417">
    <property type="entry name" value="P-loop_NTPase"/>
</dbReference>
<dbReference type="InterPro" id="IPR001267">
    <property type="entry name" value="Thymidine_kinase"/>
</dbReference>
<dbReference type="InterPro" id="IPR020633">
    <property type="entry name" value="Thymidine_kinase_CS"/>
</dbReference>
<dbReference type="NCBIfam" id="NF003296">
    <property type="entry name" value="PRK04296.1-1"/>
    <property type="match status" value="1"/>
</dbReference>
<dbReference type="PANTHER" id="PTHR11441">
    <property type="entry name" value="THYMIDINE KINASE"/>
    <property type="match status" value="1"/>
</dbReference>
<dbReference type="PANTHER" id="PTHR11441:SF0">
    <property type="entry name" value="THYMIDINE KINASE, CYTOSOLIC"/>
    <property type="match status" value="1"/>
</dbReference>
<dbReference type="Pfam" id="PF00265">
    <property type="entry name" value="TK"/>
    <property type="match status" value="1"/>
</dbReference>
<dbReference type="PIRSF" id="PIRSF035805">
    <property type="entry name" value="TK_cell"/>
    <property type="match status" value="1"/>
</dbReference>
<dbReference type="SUPFAM" id="SSF57716">
    <property type="entry name" value="Glucocorticoid receptor-like (DNA-binding domain)"/>
    <property type="match status" value="1"/>
</dbReference>
<dbReference type="SUPFAM" id="SSF52540">
    <property type="entry name" value="P-loop containing nucleoside triphosphate hydrolases"/>
    <property type="match status" value="1"/>
</dbReference>
<dbReference type="PROSITE" id="PS00603">
    <property type="entry name" value="TK_CELLULAR_TYPE"/>
    <property type="match status" value="1"/>
</dbReference>
<proteinExistence type="inferred from homology"/>
<accession>A8FID5</accession>
<evidence type="ECO:0000255" key="1">
    <source>
        <dbReference type="HAMAP-Rule" id="MF_00124"/>
    </source>
</evidence>
<protein>
    <recommendedName>
        <fullName evidence="1">Thymidine kinase</fullName>
        <ecNumber evidence="1">2.7.1.21</ecNumber>
    </recommendedName>
</protein>
<comment type="catalytic activity">
    <reaction evidence="1">
        <text>thymidine + ATP = dTMP + ADP + H(+)</text>
        <dbReference type="Rhea" id="RHEA:19129"/>
        <dbReference type="ChEBI" id="CHEBI:15378"/>
        <dbReference type="ChEBI" id="CHEBI:17748"/>
        <dbReference type="ChEBI" id="CHEBI:30616"/>
        <dbReference type="ChEBI" id="CHEBI:63528"/>
        <dbReference type="ChEBI" id="CHEBI:456216"/>
        <dbReference type="EC" id="2.7.1.21"/>
    </reaction>
</comment>
<comment type="subunit">
    <text evidence="1">Homotetramer.</text>
</comment>
<comment type="subcellular location">
    <subcellularLocation>
        <location evidence="1">Cytoplasm</location>
    </subcellularLocation>
</comment>
<comment type="similarity">
    <text evidence="1">Belongs to the thymidine kinase family.</text>
</comment>
<name>KITH_BACP2</name>
<feature type="chain" id="PRO_1000057814" description="Thymidine kinase">
    <location>
        <begin position="1"/>
        <end position="200"/>
    </location>
</feature>
<feature type="active site" description="Proton acceptor" evidence="1">
    <location>
        <position position="89"/>
    </location>
</feature>
<feature type="binding site" evidence="1">
    <location>
        <begin position="15"/>
        <end position="22"/>
    </location>
    <ligand>
        <name>ATP</name>
        <dbReference type="ChEBI" id="CHEBI:30616"/>
    </ligand>
</feature>
<feature type="binding site" evidence="1">
    <location>
        <begin position="88"/>
        <end position="91"/>
    </location>
    <ligand>
        <name>ATP</name>
        <dbReference type="ChEBI" id="CHEBI:30616"/>
    </ligand>
</feature>
<feature type="binding site" evidence="1">
    <location>
        <position position="145"/>
    </location>
    <ligand>
        <name>Zn(2+)</name>
        <dbReference type="ChEBI" id="CHEBI:29105"/>
    </ligand>
</feature>
<feature type="binding site" evidence="1">
    <location>
        <position position="148"/>
    </location>
    <ligand>
        <name>Zn(2+)</name>
        <dbReference type="ChEBI" id="CHEBI:29105"/>
    </ligand>
</feature>
<feature type="binding site" evidence="1">
    <location>
        <position position="183"/>
    </location>
    <ligand>
        <name>Zn(2+)</name>
        <dbReference type="ChEBI" id="CHEBI:29105"/>
    </ligand>
</feature>
<feature type="binding site" evidence="1">
    <location>
        <position position="186"/>
    </location>
    <ligand>
        <name>Zn(2+)</name>
        <dbReference type="ChEBI" id="CHEBI:29105"/>
    </ligand>
</feature>
<keyword id="KW-0067">ATP-binding</keyword>
<keyword id="KW-0963">Cytoplasm</keyword>
<keyword id="KW-0237">DNA synthesis</keyword>
<keyword id="KW-0418">Kinase</keyword>
<keyword id="KW-0479">Metal-binding</keyword>
<keyword id="KW-0547">Nucleotide-binding</keyword>
<keyword id="KW-0808">Transferase</keyword>
<keyword id="KW-0862">Zinc</keyword>
<gene>
    <name evidence="1" type="primary">tdk</name>
    <name type="ordered locus">BPUM_3349</name>
</gene>
<organism>
    <name type="scientific">Bacillus pumilus (strain SAFR-032)</name>
    <dbReference type="NCBI Taxonomy" id="315750"/>
    <lineage>
        <taxon>Bacteria</taxon>
        <taxon>Bacillati</taxon>
        <taxon>Bacillota</taxon>
        <taxon>Bacilli</taxon>
        <taxon>Bacillales</taxon>
        <taxon>Bacillaceae</taxon>
        <taxon>Bacillus</taxon>
    </lineage>
</organism>
<sequence>MYVMKQSGWLEVICGSMFSGKSEELIRRAKRATFAKQEVKIFKPAIDNRYSTSSVVSHNGSSVDGIAVASPKDIITHISERTDVIGIDEVQFFDETIIDIVTQLADKGYRVIVAGLDQDFRGEPFGVVPHLMACAELVTKLQAVCSVCGSPASRTQRLIDGKPASYDDPIILVGAQESYEARCRHHHEVPRLDVGTTLDN</sequence>